<organism>
    <name type="scientific">Aeromonas salmonicida (strain A449)</name>
    <dbReference type="NCBI Taxonomy" id="382245"/>
    <lineage>
        <taxon>Bacteria</taxon>
        <taxon>Pseudomonadati</taxon>
        <taxon>Pseudomonadota</taxon>
        <taxon>Gammaproteobacteria</taxon>
        <taxon>Aeromonadales</taxon>
        <taxon>Aeromonadaceae</taxon>
        <taxon>Aeromonas</taxon>
    </lineage>
</organism>
<protein>
    <recommendedName>
        <fullName evidence="1">tRNA/tmRNA (uracil-C(5))-methyltransferase</fullName>
        <ecNumber evidence="1">2.1.1.-</ecNumber>
        <ecNumber evidence="1">2.1.1.35</ecNumber>
    </recommendedName>
    <alternativeName>
        <fullName evidence="1">tRNA (uracil(54)-C(5))-methyltransferase</fullName>
    </alternativeName>
    <alternativeName>
        <fullName evidence="1">tRNA(m5U54)-methyltransferase</fullName>
        <shortName evidence="1">RUMT</shortName>
    </alternativeName>
    <alternativeName>
        <fullName evidence="1">tmRNA (uracil(341)-C(5))-methyltransferase</fullName>
    </alternativeName>
</protein>
<reference key="1">
    <citation type="journal article" date="2008" name="BMC Genomics">
        <title>The genome of Aeromonas salmonicida subsp. salmonicida A449: insights into the evolution of a fish pathogen.</title>
        <authorList>
            <person name="Reith M.E."/>
            <person name="Singh R.K."/>
            <person name="Curtis B."/>
            <person name="Boyd J.M."/>
            <person name="Bouevitch A."/>
            <person name="Kimball J."/>
            <person name="Munholland J."/>
            <person name="Murphy C."/>
            <person name="Sarty D."/>
            <person name="Williams J."/>
            <person name="Nash J.H."/>
            <person name="Johnson S.C."/>
            <person name="Brown L.L."/>
        </authorList>
    </citation>
    <scope>NUCLEOTIDE SEQUENCE [LARGE SCALE GENOMIC DNA]</scope>
    <source>
        <strain>A449</strain>
    </source>
</reference>
<accession>A4SHG2</accession>
<sequence>MTQIQQAGADSQALRTPADYQAQLDEKRERLTQLFAGFNPPALEVHASPAEHYRMRAEFRIWHEGDDLFHCMYAQATKEIIRVDHFPTASLLINQLMPVLLAGLRPHFVLRRKLFQIDYLSTQSGQIIVSLLYHRKLEAEWQQAAETLQADLQAQGFDLRLIGRAHKQKICLGDDFVIEQLNVAGRQLTYKQVENSFTQPNAAINEQMLGWALDVTRGSEGDLLELYCGNGNFSIALAQNFRKVLATEIAKPSVDSAQFNIAANGVDNLIILRMSAEEFTMAMRGEREFNRLKGVDLKSYQCNTIFVDPPRAGLDDATVKLVQEYDNILYISCNPETLQANMAVLGETHEVARFALFDQFPWTHHMEAGVYLKRKAG</sequence>
<gene>
    <name evidence="1" type="primary">trmA</name>
    <name type="ordered locus">ASA_0135</name>
</gene>
<dbReference type="EC" id="2.1.1.-" evidence="1"/>
<dbReference type="EC" id="2.1.1.35" evidence="1"/>
<dbReference type="EMBL" id="CP000644">
    <property type="protein sequence ID" value="ABO88334.1"/>
    <property type="molecule type" value="Genomic_DNA"/>
</dbReference>
<dbReference type="RefSeq" id="WP_005318248.1">
    <property type="nucleotide sequence ID" value="NC_009348.1"/>
</dbReference>
<dbReference type="SMR" id="A4SHG2"/>
<dbReference type="STRING" id="29491.GCA_000820065_04105"/>
<dbReference type="KEGG" id="asa:ASA_0135"/>
<dbReference type="eggNOG" id="COG2265">
    <property type="taxonomic scope" value="Bacteria"/>
</dbReference>
<dbReference type="HOGENOM" id="CLU_043022_0_0_6"/>
<dbReference type="Proteomes" id="UP000000225">
    <property type="component" value="Chromosome"/>
</dbReference>
<dbReference type="GO" id="GO:0005829">
    <property type="term" value="C:cytosol"/>
    <property type="evidence" value="ECO:0007669"/>
    <property type="project" value="TreeGrafter"/>
</dbReference>
<dbReference type="GO" id="GO:0019843">
    <property type="term" value="F:rRNA binding"/>
    <property type="evidence" value="ECO:0007669"/>
    <property type="project" value="TreeGrafter"/>
</dbReference>
<dbReference type="GO" id="GO:0030697">
    <property type="term" value="F:tRNA (uracil(54)-C5)-methyltransferase activity, S-adenosyl methionine-dependent"/>
    <property type="evidence" value="ECO:0007669"/>
    <property type="project" value="UniProtKB-UniRule"/>
</dbReference>
<dbReference type="GO" id="GO:0000049">
    <property type="term" value="F:tRNA binding"/>
    <property type="evidence" value="ECO:0007669"/>
    <property type="project" value="TreeGrafter"/>
</dbReference>
<dbReference type="GO" id="GO:0030488">
    <property type="term" value="P:tRNA methylation"/>
    <property type="evidence" value="ECO:0007669"/>
    <property type="project" value="UniProtKB-UniRule"/>
</dbReference>
<dbReference type="CDD" id="cd02440">
    <property type="entry name" value="AdoMet_MTases"/>
    <property type="match status" value="1"/>
</dbReference>
<dbReference type="FunFam" id="2.40.50.1070:FF:000001">
    <property type="entry name" value="tRNA/tmRNA (uracil-C(5))-methyltransferase"/>
    <property type="match status" value="1"/>
</dbReference>
<dbReference type="FunFam" id="3.40.50.150:FF:000012">
    <property type="entry name" value="tRNA/tmRNA (uracil-C(5))-methyltransferase"/>
    <property type="match status" value="1"/>
</dbReference>
<dbReference type="Gene3D" id="2.40.50.1070">
    <property type="match status" value="1"/>
</dbReference>
<dbReference type="Gene3D" id="3.40.50.150">
    <property type="entry name" value="Vaccinia Virus protein VP39"/>
    <property type="match status" value="1"/>
</dbReference>
<dbReference type="HAMAP" id="MF_01011">
    <property type="entry name" value="RNA_methyltr_TrmA"/>
    <property type="match status" value="1"/>
</dbReference>
<dbReference type="InterPro" id="IPR030390">
    <property type="entry name" value="MeTrfase_TrmA_AS"/>
</dbReference>
<dbReference type="InterPro" id="IPR030391">
    <property type="entry name" value="MeTrfase_TrmA_CS"/>
</dbReference>
<dbReference type="InterPro" id="IPR029063">
    <property type="entry name" value="SAM-dependent_MTases_sf"/>
</dbReference>
<dbReference type="InterPro" id="IPR011869">
    <property type="entry name" value="TrmA_MeTrfase"/>
</dbReference>
<dbReference type="InterPro" id="IPR010280">
    <property type="entry name" value="U5_MeTrfase_fam"/>
</dbReference>
<dbReference type="NCBIfam" id="TIGR02143">
    <property type="entry name" value="trmA_only"/>
    <property type="match status" value="1"/>
</dbReference>
<dbReference type="PANTHER" id="PTHR47790">
    <property type="entry name" value="TRNA/TMRNA (URACIL-C(5))-METHYLTRANSFERASE"/>
    <property type="match status" value="1"/>
</dbReference>
<dbReference type="PANTHER" id="PTHR47790:SF2">
    <property type="entry name" value="TRNA_TMRNA (URACIL-C(5))-METHYLTRANSFERASE"/>
    <property type="match status" value="1"/>
</dbReference>
<dbReference type="Pfam" id="PF05958">
    <property type="entry name" value="tRNA_U5-meth_tr"/>
    <property type="match status" value="1"/>
</dbReference>
<dbReference type="SUPFAM" id="SSF53335">
    <property type="entry name" value="S-adenosyl-L-methionine-dependent methyltransferases"/>
    <property type="match status" value="1"/>
</dbReference>
<dbReference type="PROSITE" id="PS51687">
    <property type="entry name" value="SAM_MT_RNA_M5U"/>
    <property type="match status" value="1"/>
</dbReference>
<dbReference type="PROSITE" id="PS01230">
    <property type="entry name" value="TRMA_1"/>
    <property type="match status" value="1"/>
</dbReference>
<dbReference type="PROSITE" id="PS01231">
    <property type="entry name" value="TRMA_2"/>
    <property type="match status" value="1"/>
</dbReference>
<evidence type="ECO:0000255" key="1">
    <source>
        <dbReference type="HAMAP-Rule" id="MF_01011"/>
    </source>
</evidence>
<comment type="function">
    <text evidence="1">Dual-specificity methyltransferase that catalyzes the formation of 5-methyluridine at position 54 (m5U54) in all tRNAs, and that of position 341 (m5U341) in tmRNA (transfer-mRNA).</text>
</comment>
<comment type="catalytic activity">
    <reaction evidence="1">
        <text>uridine(54) in tRNA + S-adenosyl-L-methionine = 5-methyluridine(54) in tRNA + S-adenosyl-L-homocysteine + H(+)</text>
        <dbReference type="Rhea" id="RHEA:42712"/>
        <dbReference type="Rhea" id="RHEA-COMP:10167"/>
        <dbReference type="Rhea" id="RHEA-COMP:10193"/>
        <dbReference type="ChEBI" id="CHEBI:15378"/>
        <dbReference type="ChEBI" id="CHEBI:57856"/>
        <dbReference type="ChEBI" id="CHEBI:59789"/>
        <dbReference type="ChEBI" id="CHEBI:65315"/>
        <dbReference type="ChEBI" id="CHEBI:74447"/>
        <dbReference type="EC" id="2.1.1.35"/>
    </reaction>
</comment>
<comment type="catalytic activity">
    <reaction evidence="1">
        <text>uridine(341) in tmRNA + S-adenosyl-L-methionine = 5-methyluridine(341) in tmRNA + S-adenosyl-L-homocysteine + H(+)</text>
        <dbReference type="Rhea" id="RHEA:43612"/>
        <dbReference type="Rhea" id="RHEA-COMP:10630"/>
        <dbReference type="Rhea" id="RHEA-COMP:10631"/>
        <dbReference type="ChEBI" id="CHEBI:15378"/>
        <dbReference type="ChEBI" id="CHEBI:57856"/>
        <dbReference type="ChEBI" id="CHEBI:59789"/>
        <dbReference type="ChEBI" id="CHEBI:65315"/>
        <dbReference type="ChEBI" id="CHEBI:74447"/>
    </reaction>
</comment>
<comment type="similarity">
    <text evidence="1">Belongs to the class I-like SAM-binding methyltransferase superfamily. RNA M5U methyltransferase family. TrmA subfamily.</text>
</comment>
<name>TRMA_AERS4</name>
<proteinExistence type="inferred from homology"/>
<feature type="chain" id="PRO_1000062989" description="tRNA/tmRNA (uracil-C(5))-methyltransferase">
    <location>
        <begin position="1"/>
        <end position="377"/>
    </location>
</feature>
<feature type="active site" description="Nucleophile" evidence="1">
    <location>
        <position position="333"/>
    </location>
</feature>
<feature type="active site" description="Proton acceptor" evidence="1">
    <location>
        <position position="367"/>
    </location>
</feature>
<feature type="binding site" evidence="1">
    <location>
        <position position="199"/>
    </location>
    <ligand>
        <name>S-adenosyl-L-methionine</name>
        <dbReference type="ChEBI" id="CHEBI:59789"/>
    </ligand>
</feature>
<feature type="binding site" evidence="1">
    <location>
        <position position="227"/>
    </location>
    <ligand>
        <name>S-adenosyl-L-methionine</name>
        <dbReference type="ChEBI" id="CHEBI:59789"/>
    </ligand>
</feature>
<feature type="binding site" evidence="1">
    <location>
        <position position="232"/>
    </location>
    <ligand>
        <name>S-adenosyl-L-methionine</name>
        <dbReference type="ChEBI" id="CHEBI:59789"/>
    </ligand>
</feature>
<feature type="binding site" evidence="1">
    <location>
        <position position="248"/>
    </location>
    <ligand>
        <name>S-adenosyl-L-methionine</name>
        <dbReference type="ChEBI" id="CHEBI:59789"/>
    </ligand>
</feature>
<feature type="binding site" evidence="1">
    <location>
        <position position="308"/>
    </location>
    <ligand>
        <name>S-adenosyl-L-methionine</name>
        <dbReference type="ChEBI" id="CHEBI:59789"/>
    </ligand>
</feature>
<keyword id="KW-0489">Methyltransferase</keyword>
<keyword id="KW-0949">S-adenosyl-L-methionine</keyword>
<keyword id="KW-0808">Transferase</keyword>
<keyword id="KW-0819">tRNA processing</keyword>